<keyword id="KW-0414">Isoprene biosynthesis</keyword>
<keyword id="KW-0456">Lyase</keyword>
<keyword id="KW-0479">Metal-binding</keyword>
<keyword id="KW-1185">Reference proteome</keyword>
<gene>
    <name evidence="1" type="primary">ispF</name>
    <name type="ordered locus">LA_3591</name>
</gene>
<evidence type="ECO:0000255" key="1">
    <source>
        <dbReference type="HAMAP-Rule" id="MF_00107"/>
    </source>
</evidence>
<protein>
    <recommendedName>
        <fullName evidence="1">2-C-methyl-D-erythritol 2,4-cyclodiphosphate synthase</fullName>
        <shortName evidence="1">MECDP-synthase</shortName>
        <shortName evidence="1">MECPP-synthase</shortName>
        <shortName evidence="1">MECPS</shortName>
        <ecNumber evidence="1">4.6.1.12</ecNumber>
    </recommendedName>
</protein>
<proteinExistence type="inferred from homology"/>
<reference key="1">
    <citation type="journal article" date="2003" name="Nature">
        <title>Unique physiological and pathogenic features of Leptospira interrogans revealed by whole-genome sequencing.</title>
        <authorList>
            <person name="Ren S.-X."/>
            <person name="Fu G."/>
            <person name="Jiang X.-G."/>
            <person name="Zeng R."/>
            <person name="Miao Y.-G."/>
            <person name="Xu H."/>
            <person name="Zhang Y.-X."/>
            <person name="Xiong H."/>
            <person name="Lu G."/>
            <person name="Lu L.-F."/>
            <person name="Jiang H.-Q."/>
            <person name="Jia J."/>
            <person name="Tu Y.-F."/>
            <person name="Jiang J.-X."/>
            <person name="Gu W.-Y."/>
            <person name="Zhang Y.-Q."/>
            <person name="Cai Z."/>
            <person name="Sheng H.-H."/>
            <person name="Yin H.-F."/>
            <person name="Zhang Y."/>
            <person name="Zhu G.-F."/>
            <person name="Wan M."/>
            <person name="Huang H.-L."/>
            <person name="Qian Z."/>
            <person name="Wang S.-Y."/>
            <person name="Ma W."/>
            <person name="Yao Z.-J."/>
            <person name="Shen Y."/>
            <person name="Qiang B.-Q."/>
            <person name="Xia Q.-C."/>
            <person name="Guo X.-K."/>
            <person name="Danchin A."/>
            <person name="Saint Girons I."/>
            <person name="Somerville R.L."/>
            <person name="Wen Y.-M."/>
            <person name="Shi M.-H."/>
            <person name="Chen Z."/>
            <person name="Xu J.-G."/>
            <person name="Zhao G.-P."/>
        </authorList>
    </citation>
    <scope>NUCLEOTIDE SEQUENCE [LARGE SCALE GENOMIC DNA]</scope>
    <source>
        <strain>56601</strain>
    </source>
</reference>
<feature type="chain" id="PRO_0000189475" description="2-C-methyl-D-erythritol 2,4-cyclodiphosphate synthase">
    <location>
        <begin position="1"/>
        <end position="161"/>
    </location>
</feature>
<feature type="binding site" evidence="1">
    <location>
        <begin position="9"/>
        <end position="11"/>
    </location>
    <ligand>
        <name>4-CDP-2-C-methyl-D-erythritol 2-phosphate</name>
        <dbReference type="ChEBI" id="CHEBI:57919"/>
    </ligand>
</feature>
<feature type="binding site" evidence="1">
    <location>
        <position position="9"/>
    </location>
    <ligand>
        <name>a divalent metal cation</name>
        <dbReference type="ChEBI" id="CHEBI:60240"/>
    </ligand>
</feature>
<feature type="binding site" evidence="1">
    <location>
        <position position="11"/>
    </location>
    <ligand>
        <name>a divalent metal cation</name>
        <dbReference type="ChEBI" id="CHEBI:60240"/>
    </ligand>
</feature>
<feature type="binding site" evidence="1">
    <location>
        <begin position="37"/>
        <end position="38"/>
    </location>
    <ligand>
        <name>4-CDP-2-C-methyl-D-erythritol 2-phosphate</name>
        <dbReference type="ChEBI" id="CHEBI:57919"/>
    </ligand>
</feature>
<feature type="binding site" evidence="1">
    <location>
        <position position="45"/>
    </location>
    <ligand>
        <name>a divalent metal cation</name>
        <dbReference type="ChEBI" id="CHEBI:60240"/>
    </ligand>
</feature>
<feature type="binding site" evidence="1">
    <location>
        <begin position="59"/>
        <end position="61"/>
    </location>
    <ligand>
        <name>4-CDP-2-C-methyl-D-erythritol 2-phosphate</name>
        <dbReference type="ChEBI" id="CHEBI:57919"/>
    </ligand>
</feature>
<feature type="binding site" evidence="1">
    <location>
        <begin position="64"/>
        <end position="68"/>
    </location>
    <ligand>
        <name>4-CDP-2-C-methyl-D-erythritol 2-phosphate</name>
        <dbReference type="ChEBI" id="CHEBI:57919"/>
    </ligand>
</feature>
<feature type="binding site" evidence="1">
    <location>
        <begin position="135"/>
        <end position="138"/>
    </location>
    <ligand>
        <name>4-CDP-2-C-methyl-D-erythritol 2-phosphate</name>
        <dbReference type="ChEBI" id="CHEBI:57919"/>
    </ligand>
</feature>
<feature type="binding site" evidence="1">
    <location>
        <position position="145"/>
    </location>
    <ligand>
        <name>4-CDP-2-C-methyl-D-erythritol 2-phosphate</name>
        <dbReference type="ChEBI" id="CHEBI:57919"/>
    </ligand>
</feature>
<feature type="site" description="Transition state stabilizer" evidence="1">
    <location>
        <position position="37"/>
    </location>
</feature>
<feature type="site" description="Transition state stabilizer" evidence="1">
    <location>
        <position position="136"/>
    </location>
</feature>
<organism>
    <name type="scientific">Leptospira interrogans serogroup Icterohaemorrhagiae serovar Lai (strain 56601)</name>
    <dbReference type="NCBI Taxonomy" id="189518"/>
    <lineage>
        <taxon>Bacteria</taxon>
        <taxon>Pseudomonadati</taxon>
        <taxon>Spirochaetota</taxon>
        <taxon>Spirochaetia</taxon>
        <taxon>Leptospirales</taxon>
        <taxon>Leptospiraceae</taxon>
        <taxon>Leptospira</taxon>
    </lineage>
</organism>
<accession>Q8F0A5</accession>
<sequence>MYRIGNGIDFHKLEINLNRPLILGGIECESEFALVGHSDADIILHAISDAILGALALGDIGQYFPDTDPSLKNIDSKIILVKCLELMKEKNFDLVNIDCTVIGERPKITPLKDRITKSLSNLLNLPLDCISVKATTTEKMGALGRQEGIGTFCSILLEKRS</sequence>
<dbReference type="EC" id="4.6.1.12" evidence="1"/>
<dbReference type="EMBL" id="AE010300">
    <property type="protein sequence ID" value="AAN50789.1"/>
    <property type="molecule type" value="Genomic_DNA"/>
</dbReference>
<dbReference type="RefSeq" id="NP_713771.1">
    <property type="nucleotide sequence ID" value="NC_004342.2"/>
</dbReference>
<dbReference type="RefSeq" id="WP_000285625.1">
    <property type="nucleotide sequence ID" value="NC_004342.2"/>
</dbReference>
<dbReference type="SMR" id="Q8F0A5"/>
<dbReference type="FunCoup" id="Q8F0A5">
    <property type="interactions" value="330"/>
</dbReference>
<dbReference type="STRING" id="189518.LA_3591"/>
<dbReference type="PaxDb" id="189518-LA_3591"/>
<dbReference type="EnsemblBacteria" id="AAN50789">
    <property type="protein sequence ID" value="AAN50789"/>
    <property type="gene ID" value="LA_3591"/>
</dbReference>
<dbReference type="KEGG" id="lil:LA_3591"/>
<dbReference type="PATRIC" id="fig|189518.3.peg.3561"/>
<dbReference type="HOGENOM" id="CLU_084630_2_0_12"/>
<dbReference type="InParanoid" id="Q8F0A5"/>
<dbReference type="OrthoDB" id="9804336at2"/>
<dbReference type="UniPathway" id="UPA00056">
    <property type="reaction ID" value="UER00095"/>
</dbReference>
<dbReference type="Proteomes" id="UP000001408">
    <property type="component" value="Chromosome I"/>
</dbReference>
<dbReference type="GO" id="GO:0008685">
    <property type="term" value="F:2-C-methyl-D-erythritol 2,4-cyclodiphosphate synthase activity"/>
    <property type="evidence" value="ECO:0000318"/>
    <property type="project" value="GO_Central"/>
</dbReference>
<dbReference type="GO" id="GO:0046872">
    <property type="term" value="F:metal ion binding"/>
    <property type="evidence" value="ECO:0007669"/>
    <property type="project" value="UniProtKB-KW"/>
</dbReference>
<dbReference type="GO" id="GO:0019288">
    <property type="term" value="P:isopentenyl diphosphate biosynthetic process, methylerythritol 4-phosphate pathway"/>
    <property type="evidence" value="ECO:0007669"/>
    <property type="project" value="UniProtKB-UniRule"/>
</dbReference>
<dbReference type="GO" id="GO:0016114">
    <property type="term" value="P:terpenoid biosynthetic process"/>
    <property type="evidence" value="ECO:0007669"/>
    <property type="project" value="InterPro"/>
</dbReference>
<dbReference type="CDD" id="cd00554">
    <property type="entry name" value="MECDP_synthase"/>
    <property type="match status" value="1"/>
</dbReference>
<dbReference type="Gene3D" id="3.30.1330.50">
    <property type="entry name" value="2-C-methyl-D-erythritol 2,4-cyclodiphosphate synthase"/>
    <property type="match status" value="1"/>
</dbReference>
<dbReference type="HAMAP" id="MF_00107">
    <property type="entry name" value="IspF"/>
    <property type="match status" value="1"/>
</dbReference>
<dbReference type="InterPro" id="IPR003526">
    <property type="entry name" value="MECDP_synthase"/>
</dbReference>
<dbReference type="InterPro" id="IPR020555">
    <property type="entry name" value="MECDP_synthase_CS"/>
</dbReference>
<dbReference type="InterPro" id="IPR036571">
    <property type="entry name" value="MECDP_synthase_sf"/>
</dbReference>
<dbReference type="NCBIfam" id="TIGR00151">
    <property type="entry name" value="ispF"/>
    <property type="match status" value="1"/>
</dbReference>
<dbReference type="PANTHER" id="PTHR43181">
    <property type="entry name" value="2-C-METHYL-D-ERYTHRITOL 2,4-CYCLODIPHOSPHATE SYNTHASE, CHLOROPLASTIC"/>
    <property type="match status" value="1"/>
</dbReference>
<dbReference type="PANTHER" id="PTHR43181:SF1">
    <property type="entry name" value="2-C-METHYL-D-ERYTHRITOL 2,4-CYCLODIPHOSPHATE SYNTHASE, CHLOROPLASTIC"/>
    <property type="match status" value="1"/>
</dbReference>
<dbReference type="Pfam" id="PF02542">
    <property type="entry name" value="YgbB"/>
    <property type="match status" value="1"/>
</dbReference>
<dbReference type="SUPFAM" id="SSF69765">
    <property type="entry name" value="IpsF-like"/>
    <property type="match status" value="1"/>
</dbReference>
<dbReference type="PROSITE" id="PS01350">
    <property type="entry name" value="ISPF"/>
    <property type="match status" value="1"/>
</dbReference>
<comment type="function">
    <text evidence="1">Involved in the biosynthesis of isopentenyl diphosphate (IPP) and dimethylallyl diphosphate (DMAPP), two major building blocks of isoprenoid compounds. Catalyzes the conversion of 4-diphosphocytidyl-2-C-methyl-D-erythritol 2-phosphate (CDP-ME2P) to 2-C-methyl-D-erythritol 2,4-cyclodiphosphate (ME-CPP) with a corresponding release of cytidine 5-monophosphate (CMP).</text>
</comment>
<comment type="catalytic activity">
    <reaction evidence="1">
        <text>4-CDP-2-C-methyl-D-erythritol 2-phosphate = 2-C-methyl-D-erythritol 2,4-cyclic diphosphate + CMP</text>
        <dbReference type="Rhea" id="RHEA:23864"/>
        <dbReference type="ChEBI" id="CHEBI:57919"/>
        <dbReference type="ChEBI" id="CHEBI:58483"/>
        <dbReference type="ChEBI" id="CHEBI:60377"/>
        <dbReference type="EC" id="4.6.1.12"/>
    </reaction>
</comment>
<comment type="cofactor">
    <cofactor evidence="1">
        <name>a divalent metal cation</name>
        <dbReference type="ChEBI" id="CHEBI:60240"/>
    </cofactor>
    <text evidence="1">Binds 1 divalent metal cation per subunit.</text>
</comment>
<comment type="pathway">
    <text evidence="1">Isoprenoid biosynthesis; isopentenyl diphosphate biosynthesis via DXP pathway; isopentenyl diphosphate from 1-deoxy-D-xylulose 5-phosphate: step 4/6.</text>
</comment>
<comment type="subunit">
    <text evidence="1">Homotrimer.</text>
</comment>
<comment type="similarity">
    <text evidence="1">Belongs to the IspF family.</text>
</comment>
<name>ISPF_LEPIN</name>